<protein>
    <recommendedName>
        <fullName evidence="1">Undecaprenyl-diphosphatase</fullName>
        <ecNumber evidence="1">3.6.1.27</ecNumber>
    </recommendedName>
    <alternativeName>
        <fullName evidence="1">Bacitracin resistance protein</fullName>
    </alternativeName>
    <alternativeName>
        <fullName evidence="1">Undecaprenyl pyrophosphate phosphatase</fullName>
    </alternativeName>
</protein>
<sequence>MDWILICKALALGIVEGLTEFLPVSSTGHLIVAGSFLRFHPEQAKTFDVVIQFGAILAVCWEYRRRIIDVVTGLPAQREARRFTMNVVIATVPAVALALLFEKTIKSVLFAPVPVAVALVVGGAAILWVEGRQRERSEPARVQSIDALTPFDALKVGLAQCCALIPGMSRSGSTIIGGMLFGLERRVATEFSFFLAIPVIFGATLYETAKDWRAFNVDSVGLFAIGLVAAFVSAFACVRWLLRYVASHDFTAFAWYRIAFGLFVLLVGYSGWIEWT</sequence>
<organism>
    <name type="scientific">Burkholderia mallei (strain NCTC 10229)</name>
    <dbReference type="NCBI Taxonomy" id="412022"/>
    <lineage>
        <taxon>Bacteria</taxon>
        <taxon>Pseudomonadati</taxon>
        <taxon>Pseudomonadota</taxon>
        <taxon>Betaproteobacteria</taxon>
        <taxon>Burkholderiales</taxon>
        <taxon>Burkholderiaceae</taxon>
        <taxon>Burkholderia</taxon>
        <taxon>pseudomallei group</taxon>
    </lineage>
</organism>
<evidence type="ECO:0000255" key="1">
    <source>
        <dbReference type="HAMAP-Rule" id="MF_01006"/>
    </source>
</evidence>
<comment type="function">
    <text evidence="1">Catalyzes the dephosphorylation of undecaprenyl diphosphate (UPP). Confers resistance to bacitracin.</text>
</comment>
<comment type="catalytic activity">
    <reaction evidence="1">
        <text>di-trans,octa-cis-undecaprenyl diphosphate + H2O = di-trans,octa-cis-undecaprenyl phosphate + phosphate + H(+)</text>
        <dbReference type="Rhea" id="RHEA:28094"/>
        <dbReference type="ChEBI" id="CHEBI:15377"/>
        <dbReference type="ChEBI" id="CHEBI:15378"/>
        <dbReference type="ChEBI" id="CHEBI:43474"/>
        <dbReference type="ChEBI" id="CHEBI:58405"/>
        <dbReference type="ChEBI" id="CHEBI:60392"/>
        <dbReference type="EC" id="3.6.1.27"/>
    </reaction>
</comment>
<comment type="subcellular location">
    <subcellularLocation>
        <location evidence="1">Cell inner membrane</location>
        <topology evidence="1">Multi-pass membrane protein</topology>
    </subcellularLocation>
</comment>
<comment type="miscellaneous">
    <text>Bacitracin is thought to be involved in the inhibition of peptidoglycan synthesis by sequestering undecaprenyl diphosphate, thereby reducing the pool of lipid carrier available.</text>
</comment>
<comment type="similarity">
    <text evidence="1">Belongs to the UppP family.</text>
</comment>
<gene>
    <name evidence="1" type="primary">uppP</name>
    <name type="ordered locus">BMA10229_A2575</name>
</gene>
<dbReference type="EC" id="3.6.1.27" evidence="1"/>
<dbReference type="EMBL" id="CP000546">
    <property type="protein sequence ID" value="ABN00867.1"/>
    <property type="molecule type" value="Genomic_DNA"/>
</dbReference>
<dbReference type="RefSeq" id="WP_004185904.1">
    <property type="nucleotide sequence ID" value="NC_008836.1"/>
</dbReference>
<dbReference type="SMR" id="A2S9B4"/>
<dbReference type="KEGG" id="bml:BMA10229_A2575"/>
<dbReference type="HOGENOM" id="CLU_060296_2_0_4"/>
<dbReference type="Proteomes" id="UP000002283">
    <property type="component" value="Chromosome I"/>
</dbReference>
<dbReference type="GO" id="GO:0005886">
    <property type="term" value="C:plasma membrane"/>
    <property type="evidence" value="ECO:0007669"/>
    <property type="project" value="UniProtKB-SubCell"/>
</dbReference>
<dbReference type="GO" id="GO:0050380">
    <property type="term" value="F:undecaprenyl-diphosphatase activity"/>
    <property type="evidence" value="ECO:0007669"/>
    <property type="project" value="UniProtKB-UniRule"/>
</dbReference>
<dbReference type="GO" id="GO:0071555">
    <property type="term" value="P:cell wall organization"/>
    <property type="evidence" value="ECO:0007669"/>
    <property type="project" value="UniProtKB-KW"/>
</dbReference>
<dbReference type="GO" id="GO:0009252">
    <property type="term" value="P:peptidoglycan biosynthetic process"/>
    <property type="evidence" value="ECO:0007669"/>
    <property type="project" value="UniProtKB-KW"/>
</dbReference>
<dbReference type="GO" id="GO:0008360">
    <property type="term" value="P:regulation of cell shape"/>
    <property type="evidence" value="ECO:0007669"/>
    <property type="project" value="UniProtKB-KW"/>
</dbReference>
<dbReference type="GO" id="GO:0046677">
    <property type="term" value="P:response to antibiotic"/>
    <property type="evidence" value="ECO:0007669"/>
    <property type="project" value="UniProtKB-UniRule"/>
</dbReference>
<dbReference type="HAMAP" id="MF_01006">
    <property type="entry name" value="Undec_diphosphatase"/>
    <property type="match status" value="1"/>
</dbReference>
<dbReference type="InterPro" id="IPR003824">
    <property type="entry name" value="UppP"/>
</dbReference>
<dbReference type="NCBIfam" id="NF001389">
    <property type="entry name" value="PRK00281.1-2"/>
    <property type="match status" value="1"/>
</dbReference>
<dbReference type="NCBIfam" id="NF001390">
    <property type="entry name" value="PRK00281.1-4"/>
    <property type="match status" value="1"/>
</dbReference>
<dbReference type="NCBIfam" id="TIGR00753">
    <property type="entry name" value="undec_PP_bacA"/>
    <property type="match status" value="1"/>
</dbReference>
<dbReference type="PANTHER" id="PTHR30622">
    <property type="entry name" value="UNDECAPRENYL-DIPHOSPHATASE"/>
    <property type="match status" value="1"/>
</dbReference>
<dbReference type="PANTHER" id="PTHR30622:SF3">
    <property type="entry name" value="UNDECAPRENYL-DIPHOSPHATASE"/>
    <property type="match status" value="1"/>
</dbReference>
<dbReference type="Pfam" id="PF02673">
    <property type="entry name" value="BacA"/>
    <property type="match status" value="1"/>
</dbReference>
<name>UPPP_BURM9</name>
<reference key="1">
    <citation type="journal article" date="2010" name="Genome Biol. Evol.">
        <title>Continuing evolution of Burkholderia mallei through genome reduction and large-scale rearrangements.</title>
        <authorList>
            <person name="Losada L."/>
            <person name="Ronning C.M."/>
            <person name="DeShazer D."/>
            <person name="Woods D."/>
            <person name="Fedorova N."/>
            <person name="Kim H.S."/>
            <person name="Shabalina S.A."/>
            <person name="Pearson T.R."/>
            <person name="Brinkac L."/>
            <person name="Tan P."/>
            <person name="Nandi T."/>
            <person name="Crabtree J."/>
            <person name="Badger J."/>
            <person name="Beckstrom-Sternberg S."/>
            <person name="Saqib M."/>
            <person name="Schutzer S.E."/>
            <person name="Keim P."/>
            <person name="Nierman W.C."/>
        </authorList>
    </citation>
    <scope>NUCLEOTIDE SEQUENCE [LARGE SCALE GENOMIC DNA]</scope>
    <source>
        <strain>NCTC 10229</strain>
    </source>
</reference>
<proteinExistence type="inferred from homology"/>
<keyword id="KW-0046">Antibiotic resistance</keyword>
<keyword id="KW-0997">Cell inner membrane</keyword>
<keyword id="KW-1003">Cell membrane</keyword>
<keyword id="KW-0133">Cell shape</keyword>
<keyword id="KW-0961">Cell wall biogenesis/degradation</keyword>
<keyword id="KW-0378">Hydrolase</keyword>
<keyword id="KW-0472">Membrane</keyword>
<keyword id="KW-0573">Peptidoglycan synthesis</keyword>
<keyword id="KW-0812">Transmembrane</keyword>
<keyword id="KW-1133">Transmembrane helix</keyword>
<feature type="chain" id="PRO_1000062789" description="Undecaprenyl-diphosphatase">
    <location>
        <begin position="1"/>
        <end position="276"/>
    </location>
</feature>
<feature type="transmembrane region" description="Helical" evidence="1">
    <location>
        <begin position="85"/>
        <end position="105"/>
    </location>
</feature>
<feature type="transmembrane region" description="Helical" evidence="1">
    <location>
        <begin position="108"/>
        <end position="128"/>
    </location>
</feature>
<feature type="transmembrane region" description="Helical" evidence="1">
    <location>
        <begin position="187"/>
        <end position="207"/>
    </location>
</feature>
<feature type="transmembrane region" description="Helical" evidence="1">
    <location>
        <begin position="217"/>
        <end position="237"/>
    </location>
</feature>
<feature type="transmembrane region" description="Helical" evidence="1">
    <location>
        <begin position="253"/>
        <end position="273"/>
    </location>
</feature>
<accession>A2S9B4</accession>